<protein>
    <recommendedName>
        <fullName evidence="1">RNA-binding protein Hfq</fullName>
    </recommendedName>
</protein>
<name>HFQ_JANMA</name>
<keyword id="KW-0694">RNA-binding</keyword>
<keyword id="KW-0346">Stress response</keyword>
<proteinExistence type="inferred from homology"/>
<organism>
    <name type="scientific">Janthinobacterium sp. (strain Marseille)</name>
    <name type="common">Minibacterium massiliensis</name>
    <dbReference type="NCBI Taxonomy" id="375286"/>
    <lineage>
        <taxon>Bacteria</taxon>
        <taxon>Pseudomonadati</taxon>
        <taxon>Pseudomonadota</taxon>
        <taxon>Betaproteobacteria</taxon>
        <taxon>Burkholderiales</taxon>
        <taxon>Oxalobacteraceae</taxon>
        <taxon>Janthinobacterium</taxon>
    </lineage>
</organism>
<sequence length="78" mass="8777">MTNKGQLLQDPFLNALRKEHVPVSIYLVNGIKLQGHIESFDQYVVLLRNTVTQMVYKHAISTVVPARAVNLSLESEAE</sequence>
<comment type="function">
    <text evidence="1">RNA chaperone that binds small regulatory RNA (sRNAs) and mRNAs to facilitate mRNA translational regulation in response to envelope stress, environmental stress and changes in metabolite concentrations. Also binds with high specificity to tRNAs.</text>
</comment>
<comment type="subunit">
    <text evidence="1">Homohexamer.</text>
</comment>
<comment type="similarity">
    <text evidence="1">Belongs to the Hfq family.</text>
</comment>
<dbReference type="EMBL" id="CP000269">
    <property type="protein sequence ID" value="ABR91658.1"/>
    <property type="molecule type" value="Genomic_DNA"/>
</dbReference>
<dbReference type="RefSeq" id="WP_012079975.1">
    <property type="nucleotide sequence ID" value="NC_009659.1"/>
</dbReference>
<dbReference type="SMR" id="A6SZW5"/>
<dbReference type="STRING" id="375286.mma_2122"/>
<dbReference type="KEGG" id="mms:mma_2122"/>
<dbReference type="eggNOG" id="COG1923">
    <property type="taxonomic scope" value="Bacteria"/>
</dbReference>
<dbReference type="HOGENOM" id="CLU_113688_2_2_4"/>
<dbReference type="OrthoDB" id="9799751at2"/>
<dbReference type="Proteomes" id="UP000006388">
    <property type="component" value="Chromosome"/>
</dbReference>
<dbReference type="GO" id="GO:0005829">
    <property type="term" value="C:cytosol"/>
    <property type="evidence" value="ECO:0007669"/>
    <property type="project" value="TreeGrafter"/>
</dbReference>
<dbReference type="GO" id="GO:0003723">
    <property type="term" value="F:RNA binding"/>
    <property type="evidence" value="ECO:0007669"/>
    <property type="project" value="UniProtKB-UniRule"/>
</dbReference>
<dbReference type="GO" id="GO:0006355">
    <property type="term" value="P:regulation of DNA-templated transcription"/>
    <property type="evidence" value="ECO:0007669"/>
    <property type="project" value="InterPro"/>
</dbReference>
<dbReference type="GO" id="GO:0043487">
    <property type="term" value="P:regulation of RNA stability"/>
    <property type="evidence" value="ECO:0007669"/>
    <property type="project" value="TreeGrafter"/>
</dbReference>
<dbReference type="GO" id="GO:0045974">
    <property type="term" value="P:regulation of translation, ncRNA-mediated"/>
    <property type="evidence" value="ECO:0007669"/>
    <property type="project" value="TreeGrafter"/>
</dbReference>
<dbReference type="CDD" id="cd01716">
    <property type="entry name" value="Hfq"/>
    <property type="match status" value="1"/>
</dbReference>
<dbReference type="FunFam" id="2.30.30.100:FF:000001">
    <property type="entry name" value="RNA-binding protein Hfq"/>
    <property type="match status" value="1"/>
</dbReference>
<dbReference type="Gene3D" id="2.30.30.100">
    <property type="match status" value="1"/>
</dbReference>
<dbReference type="HAMAP" id="MF_00436">
    <property type="entry name" value="Hfq"/>
    <property type="match status" value="1"/>
</dbReference>
<dbReference type="InterPro" id="IPR005001">
    <property type="entry name" value="Hfq"/>
</dbReference>
<dbReference type="InterPro" id="IPR010920">
    <property type="entry name" value="LSM_dom_sf"/>
</dbReference>
<dbReference type="InterPro" id="IPR047575">
    <property type="entry name" value="Sm"/>
</dbReference>
<dbReference type="NCBIfam" id="TIGR02383">
    <property type="entry name" value="Hfq"/>
    <property type="match status" value="1"/>
</dbReference>
<dbReference type="NCBIfam" id="NF001602">
    <property type="entry name" value="PRK00395.1"/>
    <property type="match status" value="1"/>
</dbReference>
<dbReference type="PANTHER" id="PTHR34772">
    <property type="entry name" value="RNA-BINDING PROTEIN HFQ"/>
    <property type="match status" value="1"/>
</dbReference>
<dbReference type="PANTHER" id="PTHR34772:SF1">
    <property type="entry name" value="RNA-BINDING PROTEIN HFQ"/>
    <property type="match status" value="1"/>
</dbReference>
<dbReference type="Pfam" id="PF17209">
    <property type="entry name" value="Hfq"/>
    <property type="match status" value="1"/>
</dbReference>
<dbReference type="SUPFAM" id="SSF50182">
    <property type="entry name" value="Sm-like ribonucleoproteins"/>
    <property type="match status" value="1"/>
</dbReference>
<dbReference type="PROSITE" id="PS52002">
    <property type="entry name" value="SM"/>
    <property type="match status" value="1"/>
</dbReference>
<gene>
    <name evidence="1" type="primary">hfq</name>
    <name type="ordered locus">mma_2122</name>
</gene>
<feature type="chain" id="PRO_1000025915" description="RNA-binding protein Hfq">
    <location>
        <begin position="1"/>
        <end position="78"/>
    </location>
</feature>
<feature type="domain" description="Sm" evidence="2">
    <location>
        <begin position="10"/>
        <end position="69"/>
    </location>
</feature>
<reference key="1">
    <citation type="journal article" date="2007" name="PLoS Genet.">
        <title>Genome analysis of Minibacterium massiliensis highlights the convergent evolution of water-living bacteria.</title>
        <authorList>
            <person name="Audic S."/>
            <person name="Robert C."/>
            <person name="Campagna B."/>
            <person name="Parinello H."/>
            <person name="Claverie J.-M."/>
            <person name="Raoult D."/>
            <person name="Drancourt M."/>
        </authorList>
    </citation>
    <scope>NUCLEOTIDE SEQUENCE [LARGE SCALE GENOMIC DNA]</scope>
    <source>
        <strain>Marseille</strain>
    </source>
</reference>
<evidence type="ECO:0000255" key="1">
    <source>
        <dbReference type="HAMAP-Rule" id="MF_00436"/>
    </source>
</evidence>
<evidence type="ECO:0000255" key="2">
    <source>
        <dbReference type="PROSITE-ProRule" id="PRU01346"/>
    </source>
</evidence>
<accession>A6SZW5</accession>